<name>YCX1_CHLMO</name>
<geneLocation type="chloroplast"/>
<proteinExistence type="predicted"/>
<dbReference type="EMBL" id="X13486">
    <property type="protein sequence ID" value="CAA31842.1"/>
    <property type="molecule type" value="Genomic_DNA"/>
</dbReference>
<dbReference type="EMBL" id="X15601">
    <property type="protein sequence ID" value="CAA33623.1"/>
    <property type="molecule type" value="Genomic_DNA"/>
</dbReference>
<dbReference type="PIR" id="S04280">
    <property type="entry name" value="S04280"/>
</dbReference>
<dbReference type="SMR" id="P09753"/>
<dbReference type="GO" id="GO:0009507">
    <property type="term" value="C:chloroplast"/>
    <property type="evidence" value="ECO:0007669"/>
    <property type="project" value="UniProtKB-SubCell"/>
</dbReference>
<dbReference type="GO" id="GO:0004519">
    <property type="term" value="F:endonuclease activity"/>
    <property type="evidence" value="ECO:0007669"/>
    <property type="project" value="InterPro"/>
</dbReference>
<dbReference type="GO" id="GO:0003676">
    <property type="term" value="F:nucleic acid binding"/>
    <property type="evidence" value="ECO:0007669"/>
    <property type="project" value="InterPro"/>
</dbReference>
<dbReference type="GO" id="GO:0008270">
    <property type="term" value="F:zinc ion binding"/>
    <property type="evidence" value="ECO:0007669"/>
    <property type="project" value="InterPro"/>
</dbReference>
<dbReference type="CDD" id="cd00085">
    <property type="entry name" value="HNHc"/>
    <property type="match status" value="1"/>
</dbReference>
<dbReference type="InterPro" id="IPR002711">
    <property type="entry name" value="HNH"/>
</dbReference>
<dbReference type="InterPro" id="IPR003615">
    <property type="entry name" value="HNH_nuc"/>
</dbReference>
<dbReference type="Pfam" id="PF01844">
    <property type="entry name" value="HNH"/>
    <property type="match status" value="1"/>
</dbReference>
<dbReference type="SMART" id="SM00507">
    <property type="entry name" value="HNHc"/>
    <property type="match status" value="1"/>
</dbReference>
<protein>
    <recommendedName>
        <fullName>Uncharacterized 38.5 kDa protein in psbA intron 1</fullName>
    </recommendedName>
</protein>
<feature type="chain" id="PRO_0000217505" description="Uncharacterized 38.5 kDa protein in psbA intron 1">
    <location>
        <begin position="1"/>
        <end position="345"/>
    </location>
</feature>
<sequence>MSRKKTIKDYENLAATRNHEVISVSNKETPSQGDITLLCKTCNKEFTTTTISYQNARKTGCPHCKATSASLYWTGRARTKTPEQAKKNAEIKEHINKTRKEKGKAFANIKNKEDLKEKLTNDLYLPNGEKNAYNDFILKRLNDPVTGKMMEKHHIIPLHAGGPDEKWNLISLTPEDHIEAHNLRYLVYNETGDKNTIKFRNKTPNVTDQISKAKALGNETRRAQGTGIYEPGMSSKAGKIGGSVKSVEKDLKQSTKMTSGVYDALYNGSRWKHTKTNTEIVIPPNTIVKMPQLVEKLIEALPPCEEKTRLAGAKLTTATSALARVIKGKNEGGRSSYFGWSICKE</sequence>
<keyword id="KW-0150">Chloroplast</keyword>
<keyword id="KW-0934">Plastid</keyword>
<reference key="1">
    <citation type="journal article" date="1989" name="Nucleic Acids Res.">
        <title>Two group I introns with long internal open reading frames in the chloroplast psbA gene of Chlamydomonas moewusii.</title>
        <authorList>
            <person name="Turmel M."/>
            <person name="Boulanger J."/>
            <person name="Lemieux C."/>
        </authorList>
    </citation>
    <scope>NUCLEOTIDE SEQUENCE [GENOMIC DNA]</scope>
    <source>
        <strain>UTEX 97</strain>
    </source>
</reference>
<organism>
    <name type="scientific">Chlamydomonas moewusii</name>
    <name type="common">Chlamydomonas eugametos</name>
    <dbReference type="NCBI Taxonomy" id="3054"/>
    <lineage>
        <taxon>Eukaryota</taxon>
        <taxon>Viridiplantae</taxon>
        <taxon>Chlorophyta</taxon>
        <taxon>core chlorophytes</taxon>
        <taxon>Chlorophyceae</taxon>
        <taxon>CS clade</taxon>
        <taxon>Chlamydomonadales</taxon>
        <taxon>Chlamydomonadaceae</taxon>
        <taxon>Chlamydomonas</taxon>
    </lineage>
</organism>
<accession>P09753</accession>
<comment type="subcellular location">
    <subcellularLocation>
        <location>Plastid</location>
        <location>Chloroplast</location>
    </subcellularLocation>
</comment>